<reference key="1">
    <citation type="journal article" date="2006" name="Proc. Natl. Acad. Sci. U.S.A.">
        <title>Identification of genes subject to positive selection in uropathogenic strains of Escherichia coli: a comparative genomics approach.</title>
        <authorList>
            <person name="Chen S.L."/>
            <person name="Hung C.-S."/>
            <person name="Xu J."/>
            <person name="Reigstad C.S."/>
            <person name="Magrini V."/>
            <person name="Sabo A."/>
            <person name="Blasiar D."/>
            <person name="Bieri T."/>
            <person name="Meyer R.R."/>
            <person name="Ozersky P."/>
            <person name="Armstrong J.R."/>
            <person name="Fulton R.S."/>
            <person name="Latreille J.P."/>
            <person name="Spieth J."/>
            <person name="Hooton T.M."/>
            <person name="Mardis E.R."/>
            <person name="Hultgren S.J."/>
            <person name="Gordon J.I."/>
        </authorList>
    </citation>
    <scope>NUCLEOTIDE SEQUENCE [LARGE SCALE GENOMIC DNA]</scope>
    <source>
        <strain>UTI89 / UPEC</strain>
    </source>
</reference>
<feature type="chain" id="PRO_0000340118" description="Two-component-system connector protein SafA">
    <location>
        <begin position="1"/>
        <end position="65"/>
    </location>
</feature>
<feature type="topological domain" description="Cytoplasmic" evidence="1">
    <location>
        <begin position="1"/>
        <end position="18"/>
    </location>
</feature>
<feature type="transmembrane region" description="Helical; Signal-anchor for type II membrane protein" evidence="2">
    <location>
        <begin position="19"/>
        <end position="39"/>
    </location>
</feature>
<feature type="topological domain" description="Periplasmic" evidence="1">
    <location>
        <begin position="40"/>
        <end position="65"/>
    </location>
</feature>
<organism>
    <name type="scientific">Escherichia coli (strain UTI89 / UPEC)</name>
    <dbReference type="NCBI Taxonomy" id="364106"/>
    <lineage>
        <taxon>Bacteria</taxon>
        <taxon>Pseudomonadati</taxon>
        <taxon>Pseudomonadota</taxon>
        <taxon>Gammaproteobacteria</taxon>
        <taxon>Enterobacterales</taxon>
        <taxon>Enterobacteriaceae</taxon>
        <taxon>Escherichia</taxon>
    </lineage>
</organism>
<name>SAFA_ECOUT</name>
<accession>Q1RBS2</accession>
<dbReference type="EMBL" id="CP000243">
    <property type="protein sequence ID" value="ABE07192.1"/>
    <property type="molecule type" value="Genomic_DNA"/>
</dbReference>
<dbReference type="RefSeq" id="WP_000543391.1">
    <property type="nucleotide sequence ID" value="NZ_CP064825.1"/>
</dbReference>
<dbReference type="SMR" id="Q1RBS2"/>
<dbReference type="KEGG" id="eci:UTI89_C1714"/>
<dbReference type="HOGENOM" id="CLU_2842804_0_0_6"/>
<dbReference type="Proteomes" id="UP000001952">
    <property type="component" value="Chromosome"/>
</dbReference>
<dbReference type="GO" id="GO:0005886">
    <property type="term" value="C:plasma membrane"/>
    <property type="evidence" value="ECO:0007669"/>
    <property type="project" value="UniProtKB-SubCell"/>
</dbReference>
<dbReference type="InterPro" id="IPR031411">
    <property type="entry name" value="SafA"/>
</dbReference>
<dbReference type="Pfam" id="PF17073">
    <property type="entry name" value="SafA"/>
    <property type="match status" value="1"/>
</dbReference>
<proteinExistence type="inferred from homology"/>
<comment type="function">
    <text evidence="1">Connects the signal transduction between the two-component systems EvgS/EvgA and PhoQ/PhoP, by directly interacting with PhoQ and thus activating the PhoQ/PhoP system, in response to acid stress conditions.</text>
</comment>
<comment type="subunit">
    <text evidence="1">Interacts with PhoQ.</text>
</comment>
<comment type="subcellular location">
    <subcellularLocation>
        <location evidence="1">Cell inner membrane</location>
        <topology evidence="1">Single-pass type II membrane protein</topology>
    </subcellularLocation>
</comment>
<comment type="induction">
    <text evidence="1">By acid stress, via the EvgS/EvgA system.</text>
</comment>
<comment type="similarity">
    <text evidence="3">Belongs to the SafA family.</text>
</comment>
<gene>
    <name type="primary">safA</name>
    <name type="ordered locus">UTI89_C1714</name>
</gene>
<keyword id="KW-0997">Cell inner membrane</keyword>
<keyword id="KW-1003">Cell membrane</keyword>
<keyword id="KW-0472">Membrane</keyword>
<keyword id="KW-0735">Signal-anchor</keyword>
<keyword id="KW-0346">Stress response</keyword>
<keyword id="KW-0812">Transmembrane</keyword>
<keyword id="KW-1133">Transmembrane helix</keyword>
<protein>
    <recommendedName>
        <fullName>Two-component-system connector protein SafA</fullName>
    </recommendedName>
</protein>
<evidence type="ECO:0000250" key="1"/>
<evidence type="ECO:0000255" key="2"/>
<evidence type="ECO:0000305" key="3"/>
<sequence length="65" mass="7331">MHATTVKNKITQRDNYKEIMSVIVVVLLLTLTLIAIFSAIDQLGISEMGRMARDLTHFIINSLLD</sequence>